<evidence type="ECO:0000250" key="1">
    <source>
        <dbReference type="UniProtKB" id="P38777"/>
    </source>
</evidence>
<evidence type="ECO:0000269" key="2">
    <source>
    </source>
</evidence>
<evidence type="ECO:0000269" key="3">
    <source>
    </source>
</evidence>
<evidence type="ECO:0000269" key="4">
    <source>
    </source>
</evidence>
<evidence type="ECO:0000269" key="5">
    <source>
    </source>
</evidence>
<evidence type="ECO:0000303" key="6">
    <source>
    </source>
</evidence>
<evidence type="ECO:0000305" key="7"/>
<evidence type="ECO:0000312" key="8">
    <source>
        <dbReference type="EMBL" id="BAC20563.1"/>
    </source>
</evidence>
<gene>
    <name evidence="6" type="primary">mlcF</name>
</gene>
<comment type="function">
    <text evidence="3 4">Esterase; part of the gene cluster that mediates the biosynthesis of compactin, also known as mevastatin or ML-236B, and which acts as a potent competitive inhibitor of HMG-CoA reductase (PubMed:12172803, PubMed:12242508). Compactin biosynthesis is performed in two stages (PubMed:12172803). The first stage is catalyzed by the nonaketide synthase mlcA, which belongs to type I polyketide synthases and catalyzes the iterative nine-step formation of the polyketide (PubMed:12172803). This PKS stage is completed by the action of dehydrogenase mlcG, which catalyzes the NADPH-dependent reduction of the unsaturated tetra-, penta- and heptaketide intermediates that arise during the mlcA-mediated biosynthesis of the nonaketide chain and leads to dihydro-ML-236C carboxylate (PubMed:12172803). Covalently bound dihydro-ML-236C carboxylate is released from mlcA by the mlcF esterase (PubMed:12172803). Conversion of dihydro-ML-236C carboxylate into ML-236A carboxylate is subsequently performed with the participation of molecular oxygen and P450 monoogygenase mlcC (PubMed:12172803). Finally, mlcH performs the conversion of ML-236A carboxylate to ML-236B/compactin carboxylate through the addition of the side-chain diketide moiety produced by the diketide synthase mlcB (PubMed:12172803).</text>
</comment>
<comment type="catalytic activity">
    <reaction evidence="7">
        <text>dihydro-ML-236C-[compactin nonaketide synthase] + H2O = holo-[compactin nonaketide synthase] + dihydro-ML-236C carboxylate + H(+)</text>
        <dbReference type="Rhea" id="RHEA:57616"/>
        <dbReference type="Rhea" id="RHEA-COMP:14940"/>
        <dbReference type="Rhea" id="RHEA-COMP:14941"/>
        <dbReference type="ChEBI" id="CHEBI:15377"/>
        <dbReference type="ChEBI" id="CHEBI:15378"/>
        <dbReference type="ChEBI" id="CHEBI:64479"/>
        <dbReference type="ChEBI" id="CHEBI:142039"/>
        <dbReference type="ChEBI" id="CHEBI:142045"/>
    </reaction>
</comment>
<comment type="pathway">
    <text evidence="7">Polyketide biosynthesis.</text>
</comment>
<comment type="induction">
    <text evidence="3 5">Expression is induced at the beginning of the stationary phase, which is consistent with the timing of compactin production (PubMed:12172803). Expression is controlled by the ML-236B/compactin cluster transcription regulator mlcR (PubMed:12436257).</text>
</comment>
<comment type="biotechnology">
    <text evidence="2">Compactin (also known as mevastatin or ML-236B) and the intermediary metabolites Ml-236C and ML-236A are inhibitors of HMG-CoA reductase involved in cholesterogenesis (PubMed:1010803). Their hypocholesterolemic activity might be useful for lowering cholesterol levels in the blood and reduce artherosclerosis and coronary heart disease (PubMed:1010803).</text>
</comment>
<comment type="similarity">
    <text evidence="7">Belongs to the LovG family.</text>
</comment>
<dbReference type="EC" id="3.1.2.-" evidence="7"/>
<dbReference type="EMBL" id="AB072893">
    <property type="protein sequence ID" value="BAC20563.1"/>
    <property type="molecule type" value="Genomic_DNA"/>
</dbReference>
<dbReference type="SMR" id="Q8J0F8"/>
<dbReference type="ESTHER" id="penci-MLCF">
    <property type="family name" value="FSH1"/>
</dbReference>
<dbReference type="GO" id="GO:0005737">
    <property type="term" value="C:cytoplasm"/>
    <property type="evidence" value="ECO:0007669"/>
    <property type="project" value="TreeGrafter"/>
</dbReference>
<dbReference type="GO" id="GO:0005634">
    <property type="term" value="C:nucleus"/>
    <property type="evidence" value="ECO:0007669"/>
    <property type="project" value="TreeGrafter"/>
</dbReference>
<dbReference type="GO" id="GO:0016787">
    <property type="term" value="F:hydrolase activity"/>
    <property type="evidence" value="ECO:0007669"/>
    <property type="project" value="UniProtKB-KW"/>
</dbReference>
<dbReference type="GO" id="GO:0017000">
    <property type="term" value="P:antibiotic biosynthetic process"/>
    <property type="evidence" value="ECO:0007669"/>
    <property type="project" value="UniProtKB-ARBA"/>
</dbReference>
<dbReference type="GO" id="GO:0072330">
    <property type="term" value="P:monocarboxylic acid biosynthetic process"/>
    <property type="evidence" value="ECO:0007669"/>
    <property type="project" value="UniProtKB-ARBA"/>
</dbReference>
<dbReference type="GO" id="GO:0044550">
    <property type="term" value="P:secondary metabolite biosynthetic process"/>
    <property type="evidence" value="ECO:0007669"/>
    <property type="project" value="TreeGrafter"/>
</dbReference>
<dbReference type="Gene3D" id="3.40.50.1820">
    <property type="entry name" value="alpha/beta hydrolase"/>
    <property type="match status" value="1"/>
</dbReference>
<dbReference type="InterPro" id="IPR029058">
    <property type="entry name" value="AB_hydrolase_fold"/>
</dbReference>
<dbReference type="InterPro" id="IPR005645">
    <property type="entry name" value="FSH-like_dom"/>
</dbReference>
<dbReference type="InterPro" id="IPR050593">
    <property type="entry name" value="LovG"/>
</dbReference>
<dbReference type="PANTHER" id="PTHR48070:SF3">
    <property type="entry name" value="ESTERASE DBAE-RELATED"/>
    <property type="match status" value="1"/>
</dbReference>
<dbReference type="PANTHER" id="PTHR48070">
    <property type="entry name" value="ESTERASE OVCA2"/>
    <property type="match status" value="1"/>
</dbReference>
<dbReference type="Pfam" id="PF03959">
    <property type="entry name" value="FSH1"/>
    <property type="match status" value="1"/>
</dbReference>
<dbReference type="SUPFAM" id="SSF53474">
    <property type="entry name" value="alpha/beta-Hydrolases"/>
    <property type="match status" value="1"/>
</dbReference>
<feature type="chain" id="PRO_0000436296" description="Esterase mlcF">
    <location>
        <begin position="1"/>
        <end position="251"/>
    </location>
</feature>
<feature type="active site" description="Charge relay system" evidence="1">
    <location>
        <position position="126"/>
    </location>
</feature>
<feature type="active site" description="Charge relay system" evidence="1">
    <location>
        <position position="193"/>
    </location>
</feature>
<feature type="active site" description="Charge relay system" evidence="1">
    <location>
        <position position="221"/>
    </location>
</feature>
<proteinExistence type="evidence at protein level"/>
<keyword id="KW-0378">Hydrolase</keyword>
<reference key="1">
    <citation type="journal article" date="2002" name="Mol. Genet. Genomics">
        <title>Molecular cloning and characterization of an ML-236B (compactin) biosynthetic gene cluster in Penicillium citrinum.</title>
        <authorList>
            <person name="Abe Y."/>
            <person name="Suzuki T."/>
            <person name="Ono C."/>
            <person name="Iwamoto K."/>
            <person name="Hosobuchi M."/>
            <person name="Yoshikawa H."/>
        </authorList>
    </citation>
    <scope>NUCLEOTIDE SEQUENCE [GENOMIC DNA]</scope>
    <scope>INDUCTION</scope>
    <scope>FUNCTION</scope>
</reference>
<reference key="2">
    <citation type="journal article" date="2002" name="Mol. Genet. Genomics">
        <title>Effect of increased dosage of the ML-236B (compactin) biosynthetic gene cluster on ML-236B production in Penicillium citrinum.</title>
        <authorList>
            <person name="Abe Y."/>
            <person name="Suzuki T."/>
            <person name="Mizuno T."/>
            <person name="Ono C."/>
            <person name="Iwamoto K."/>
            <person name="Hosobuchi M."/>
            <person name="Yoshikawa H."/>
        </authorList>
    </citation>
    <scope>FUNCTION</scope>
</reference>
<reference key="3">
    <citation type="journal article" date="1976" name="J. Antibiot.">
        <title>ML-236A, ML-236B, and ML-236C, new inhibitors of cholesterogenesis produced by Penicillium citrinium.</title>
        <authorList>
            <person name="Endo A."/>
            <person name="Kuroda M."/>
            <person name="Tsujita Y."/>
        </authorList>
    </citation>
    <scope>BIOTECHNOLOGY</scope>
</reference>
<reference key="4">
    <citation type="journal article" date="2002" name="Mol. Genet. Genomics">
        <title>Functional analysis of mlcR, a regulatory gene for ML-236B (compactin) biosynthesis in Penicillium citrinum.</title>
        <authorList>
            <person name="Abe Y."/>
            <person name="Ono C."/>
            <person name="Hosobuchi M."/>
            <person name="Yoshikawa H."/>
        </authorList>
    </citation>
    <scope>INDUCTION</scope>
</reference>
<sequence>MSPARITDFSPGKPRKALLCIHGAGCSAAIFRVQISKLRVALKNEFEFVYATAPFSSSPGPGVLPVFQGMGPYYTWFQKHHDAVTNTTTPTVGDRVAAVIGPVQKTVQDWSITNPQAPIVGIVAFSEGALVATLLLHQQQMGKLPWFPKMSIAVLICCFYSDEARDYMRAEAQDDDDKLIINVPTLHLHGRQDFALQGSRQMVETHYLPQNADVLEFQGKHNFPNRPSDVQETVKRFQQLYQKVKMSGSFV</sequence>
<protein>
    <recommendedName>
        <fullName evidence="7">Esterase mlcF</fullName>
        <ecNumber evidence="7">3.1.2.-</ecNumber>
    </recommendedName>
    <alternativeName>
        <fullName evidence="6">Compactin biosynthesis protein F</fullName>
    </alternativeName>
</protein>
<accession>Q8J0F8</accession>
<name>MLCF_PENCI</name>
<organism evidence="8">
    <name type="scientific">Penicillium citrinum</name>
    <dbReference type="NCBI Taxonomy" id="5077"/>
    <lineage>
        <taxon>Eukaryota</taxon>
        <taxon>Fungi</taxon>
        <taxon>Dikarya</taxon>
        <taxon>Ascomycota</taxon>
        <taxon>Pezizomycotina</taxon>
        <taxon>Eurotiomycetes</taxon>
        <taxon>Eurotiomycetidae</taxon>
        <taxon>Eurotiales</taxon>
        <taxon>Aspergillaceae</taxon>
        <taxon>Penicillium</taxon>
    </lineage>
</organism>